<keyword id="KW-0002">3D-structure</keyword>
<keyword id="KW-0025">Alternative splicing</keyword>
<keyword id="KW-0966">Cell projection</keyword>
<keyword id="KW-1186">Ciliopathy</keyword>
<keyword id="KW-0969">Cilium</keyword>
<keyword id="KW-0175">Coiled coil</keyword>
<keyword id="KW-0963">Cytoplasm</keyword>
<keyword id="KW-0206">Cytoskeleton</keyword>
<keyword id="KW-0225">Disease variant</keyword>
<keyword id="KW-1012">Kartagener syndrome</keyword>
<keyword id="KW-0597">Phosphoprotein</keyword>
<keyword id="KW-0990">Primary ciliary dyskinesia</keyword>
<keyword id="KW-1267">Proteomics identification</keyword>
<keyword id="KW-1185">Reference proteome</keyword>
<feature type="chain" id="PRO_0000288807" description="Outer dynein arm-docking complex subunit 1">
    <location>
        <begin position="1"/>
        <end position="670"/>
    </location>
</feature>
<feature type="region of interest" description="Disordered" evidence="4">
    <location>
        <begin position="454"/>
        <end position="473"/>
    </location>
</feature>
<feature type="region of interest" description="Disordered" evidence="4">
    <location>
        <begin position="526"/>
        <end position="596"/>
    </location>
</feature>
<feature type="region of interest" description="Disordered" evidence="4">
    <location>
        <begin position="616"/>
        <end position="670"/>
    </location>
</feature>
<feature type="coiled-coil region" evidence="3">
    <location>
        <begin position="9"/>
        <end position="155"/>
    </location>
</feature>
<feature type="coiled-coil region" evidence="3">
    <location>
        <begin position="183"/>
        <end position="224"/>
    </location>
</feature>
<feature type="coiled-coil region" evidence="3">
    <location>
        <begin position="302"/>
        <end position="381"/>
    </location>
</feature>
<feature type="compositionally biased region" description="Polar residues" evidence="4">
    <location>
        <begin position="584"/>
        <end position="596"/>
    </location>
</feature>
<feature type="compositionally biased region" description="Low complexity" evidence="4">
    <location>
        <begin position="650"/>
        <end position="670"/>
    </location>
</feature>
<feature type="modified residue" description="Phosphoserine" evidence="1">
    <location>
        <position position="517"/>
    </location>
</feature>
<feature type="splice variant" id="VSP_036212" description="In isoform 2." evidence="11">
    <location>
        <begin position="1"/>
        <end position="207"/>
    </location>
</feature>
<feature type="splice variant" id="VSP_036213" description="In isoform 3." evidence="12">
    <original>ELQEQAEAQRQKDLAAAAAKLDGTLSVDLASTQRAGSSTVLVPTRHPH</original>
    <variation>RVGPAGVGPGLSVCRGPVHLPCRWSSRSRRRRSARRTWPPPPRSWTAP</variation>
    <location>
        <begin position="492"/>
        <end position="539"/>
    </location>
</feature>
<feature type="splice variant" id="VSP_036214" description="In isoform 3." evidence="12">
    <location>
        <begin position="540"/>
        <end position="670"/>
    </location>
</feature>
<feature type="sequence variant" id="VAR_086948" description="In CILD20; expressed at very low levels in patients' nasal epithelial cells; the genetic variation producing this missense variant predominantly affects splicing; dbSNP:rs147718607." evidence="5 6">
    <original>A</original>
    <variation>T</variation>
    <location>
        <position position="248"/>
    </location>
</feature>
<feature type="sequence variant" id="VAR_032501" description="In dbSNP:rs35361179.">
    <original>R</original>
    <variation>H</variation>
    <location>
        <position position="329"/>
    </location>
</feature>
<feature type="sequence variant" id="VAR_032502" description="In dbSNP:rs35461177.">
    <original>P</original>
    <variation>L</variation>
    <location>
        <position position="468"/>
    </location>
</feature>
<feature type="sequence conflict" description="In Ref. 2; BC007730." evidence="13" ref="2">
    <original>H</original>
    <variation>Y</variation>
    <location>
        <position position="224"/>
    </location>
</feature>
<accession>Q96M63</accession>
<accession>Q6ZRL4</accession>
<accession>Q96M06</accession>
<accession>Q9UFG8</accession>
<dbReference type="EMBL" id="AK057357">
    <property type="protein sequence ID" value="BAB71448.1"/>
    <property type="status" value="ALT_SEQ"/>
    <property type="molecule type" value="mRNA"/>
</dbReference>
<dbReference type="EMBL" id="AK057488">
    <property type="protein sequence ID" value="BAB71508.1"/>
    <property type="molecule type" value="mRNA"/>
</dbReference>
<dbReference type="EMBL" id="AK128144">
    <property type="protein sequence ID" value="BAC87296.1"/>
    <property type="status" value="ALT_SEQ"/>
    <property type="molecule type" value="mRNA"/>
</dbReference>
<dbReference type="EMBL" id="AC008392">
    <property type="status" value="NOT_ANNOTATED_CDS"/>
    <property type="molecule type" value="Genomic_DNA"/>
</dbReference>
<dbReference type="EMBL" id="BC007730">
    <property type="status" value="NOT_ANNOTATED_CDS"/>
    <property type="molecule type" value="mRNA"/>
</dbReference>
<dbReference type="EMBL" id="BC117431">
    <property type="protein sequence ID" value="AAI17432.1"/>
    <property type="molecule type" value="mRNA"/>
</dbReference>
<dbReference type="EMBL" id="BC117433">
    <property type="protein sequence ID" value="AAI17434.1"/>
    <property type="molecule type" value="mRNA"/>
</dbReference>
<dbReference type="EMBL" id="AL122083">
    <property type="protein sequence ID" value="CAB59257.1"/>
    <property type="molecule type" value="mRNA"/>
</dbReference>
<dbReference type="CCDS" id="CCDS12714.2">
    <molecule id="Q96M63-1"/>
</dbReference>
<dbReference type="PIR" id="T34564">
    <property type="entry name" value="T34564"/>
</dbReference>
<dbReference type="RefSeq" id="NP_653178.3">
    <molecule id="Q96M63-1"/>
    <property type="nucleotide sequence ID" value="NM_144577.4"/>
</dbReference>
<dbReference type="RefSeq" id="XP_011525817.1">
    <property type="nucleotide sequence ID" value="XM_011527515.2"/>
</dbReference>
<dbReference type="RefSeq" id="XP_011525818.1">
    <property type="nucleotide sequence ID" value="XM_011527516.2"/>
</dbReference>
<dbReference type="PDB" id="8J07">
    <property type="method" value="EM"/>
    <property type="resolution" value="4.10 A"/>
    <property type="chains" value="m6/o6/q6/s6/u6=1-670"/>
</dbReference>
<dbReference type="PDBsum" id="8J07"/>
<dbReference type="EMDB" id="EMD-35888"/>
<dbReference type="SMR" id="Q96M63"/>
<dbReference type="BioGRID" id="125015">
    <property type="interactions" value="58"/>
</dbReference>
<dbReference type="ComplexPortal" id="CPX-2626">
    <property type="entry name" value="Outer dynein arm-docking complex"/>
</dbReference>
<dbReference type="CORUM" id="Q96M63"/>
<dbReference type="FunCoup" id="Q96M63">
    <property type="interactions" value="35"/>
</dbReference>
<dbReference type="IntAct" id="Q96M63">
    <property type="interactions" value="56"/>
</dbReference>
<dbReference type="STRING" id="9606.ENSP00000318429"/>
<dbReference type="iPTMnet" id="Q96M63"/>
<dbReference type="PhosphoSitePlus" id="Q96M63"/>
<dbReference type="BioMuta" id="CCDC114"/>
<dbReference type="DMDM" id="221222533"/>
<dbReference type="jPOST" id="Q96M63"/>
<dbReference type="MassIVE" id="Q96M63"/>
<dbReference type="PaxDb" id="9606-ENSP00000318429"/>
<dbReference type="PeptideAtlas" id="Q96M63"/>
<dbReference type="ProteomicsDB" id="77300">
    <molecule id="Q96M63-1"/>
</dbReference>
<dbReference type="ProteomicsDB" id="77301">
    <molecule id="Q96M63-4"/>
</dbReference>
<dbReference type="ProteomicsDB" id="77302">
    <molecule id="Q96M63-5"/>
</dbReference>
<dbReference type="Antibodypedia" id="49648">
    <property type="antibodies" value="66 antibodies from 14 providers"/>
</dbReference>
<dbReference type="DNASU" id="93233"/>
<dbReference type="Ensembl" id="ENST00000315396.7">
    <molecule id="Q96M63-1"/>
    <property type="protein sequence ID" value="ENSP00000318429.7"/>
    <property type="gene ID" value="ENSG00000105479.16"/>
</dbReference>
<dbReference type="GeneID" id="93233"/>
<dbReference type="KEGG" id="hsa:93233"/>
<dbReference type="UCSC" id="uc002pir.3">
    <molecule id="Q96M63-1"/>
    <property type="organism name" value="human"/>
</dbReference>
<dbReference type="AGR" id="HGNC:26560"/>
<dbReference type="CTD" id="93233"/>
<dbReference type="DisGeNET" id="93233"/>
<dbReference type="GeneCards" id="ODAD1"/>
<dbReference type="GeneReviews" id="ODAD1"/>
<dbReference type="HGNC" id="HGNC:26560">
    <property type="gene designation" value="ODAD1"/>
</dbReference>
<dbReference type="HPA" id="ENSG00000105479">
    <property type="expression patterns" value="Group enriched (choroid plexus, fallopian tube, testis)"/>
</dbReference>
<dbReference type="MalaCards" id="ODAD1"/>
<dbReference type="MIM" id="615038">
    <property type="type" value="gene"/>
</dbReference>
<dbReference type="MIM" id="615067">
    <property type="type" value="phenotype"/>
</dbReference>
<dbReference type="neXtProt" id="NX_Q96M63"/>
<dbReference type="OpenTargets" id="ENSG00000105479"/>
<dbReference type="Orphanet" id="244">
    <property type="disease" value="Primary ciliary dyskinesia"/>
</dbReference>
<dbReference type="VEuPathDB" id="HostDB:ENSG00000105479"/>
<dbReference type="eggNOG" id="ENOG502QSIU">
    <property type="taxonomic scope" value="Eukaryota"/>
</dbReference>
<dbReference type="GeneTree" id="ENSGT00940000153116"/>
<dbReference type="HOGENOM" id="CLU_027546_3_1_1"/>
<dbReference type="InParanoid" id="Q96M63"/>
<dbReference type="OMA" id="MRCEDAM"/>
<dbReference type="OrthoDB" id="6766775at2759"/>
<dbReference type="PAN-GO" id="Q96M63">
    <property type="GO annotations" value="3 GO annotations based on evolutionary models"/>
</dbReference>
<dbReference type="PhylomeDB" id="Q96M63"/>
<dbReference type="TreeFam" id="TF323742"/>
<dbReference type="PathwayCommons" id="Q96M63"/>
<dbReference type="SignaLink" id="Q96M63"/>
<dbReference type="BioGRID-ORCS" id="93233">
    <property type="hits" value="39 hits in 1149 CRISPR screens"/>
</dbReference>
<dbReference type="GenomeRNAi" id="93233"/>
<dbReference type="Pharos" id="Q96M63">
    <property type="development level" value="Tbio"/>
</dbReference>
<dbReference type="PRO" id="PR:Q96M63"/>
<dbReference type="Proteomes" id="UP000005640">
    <property type="component" value="Chromosome 19"/>
</dbReference>
<dbReference type="RNAct" id="Q96M63">
    <property type="molecule type" value="protein"/>
</dbReference>
<dbReference type="Bgee" id="ENSG00000105479">
    <property type="expression patterns" value="Expressed in oviduct epithelium and 118 other cell types or tissues"/>
</dbReference>
<dbReference type="ExpressionAtlas" id="Q96M63">
    <property type="expression patterns" value="baseline and differential"/>
</dbReference>
<dbReference type="GO" id="GO:0005930">
    <property type="term" value="C:axoneme"/>
    <property type="evidence" value="ECO:0000314"/>
    <property type="project" value="SYSCILIA_CCNET"/>
</dbReference>
<dbReference type="GO" id="GO:0005929">
    <property type="term" value="C:cilium"/>
    <property type="evidence" value="ECO:0000314"/>
    <property type="project" value="UniProtKB"/>
</dbReference>
<dbReference type="GO" id="GO:0036157">
    <property type="term" value="C:outer dynein arm"/>
    <property type="evidence" value="ECO:0000315"/>
    <property type="project" value="UniProtKB"/>
</dbReference>
<dbReference type="GO" id="GO:0120228">
    <property type="term" value="C:outer dynein arm docking complex"/>
    <property type="evidence" value="ECO:0000250"/>
    <property type="project" value="UniProtKB"/>
</dbReference>
<dbReference type="GO" id="GO:0003341">
    <property type="term" value="P:cilium movement"/>
    <property type="evidence" value="ECO:0000315"/>
    <property type="project" value="SYSCILIA_CCNET"/>
</dbReference>
<dbReference type="GO" id="GO:0036158">
    <property type="term" value="P:outer dynein arm assembly"/>
    <property type="evidence" value="ECO:0000315"/>
    <property type="project" value="UniProtKB"/>
</dbReference>
<dbReference type="InterPro" id="IPR051876">
    <property type="entry name" value="ODA-DC/CCD"/>
</dbReference>
<dbReference type="InterPro" id="IPR049258">
    <property type="entry name" value="ODAD1_CC"/>
</dbReference>
<dbReference type="PANTHER" id="PTHR21694">
    <property type="entry name" value="COILED-COIL DOMAIN-CONTAINING PROTEIN 63"/>
    <property type="match status" value="1"/>
</dbReference>
<dbReference type="PANTHER" id="PTHR21694:SF35">
    <property type="entry name" value="OUTER DYNEIN ARM-DOCKING COMPLEX SUBUNIT 1"/>
    <property type="match status" value="1"/>
</dbReference>
<dbReference type="Pfam" id="PF21773">
    <property type="entry name" value="ODAD1_CC"/>
    <property type="match status" value="1"/>
</dbReference>
<proteinExistence type="evidence at protein level"/>
<reference key="1">
    <citation type="journal article" date="2004" name="Nat. Genet.">
        <title>Complete sequencing and characterization of 21,243 full-length human cDNAs.</title>
        <authorList>
            <person name="Ota T."/>
            <person name="Suzuki Y."/>
            <person name="Nishikawa T."/>
            <person name="Otsuki T."/>
            <person name="Sugiyama T."/>
            <person name="Irie R."/>
            <person name="Wakamatsu A."/>
            <person name="Hayashi K."/>
            <person name="Sato H."/>
            <person name="Nagai K."/>
            <person name="Kimura K."/>
            <person name="Makita H."/>
            <person name="Sekine M."/>
            <person name="Obayashi M."/>
            <person name="Nishi T."/>
            <person name="Shibahara T."/>
            <person name="Tanaka T."/>
            <person name="Ishii S."/>
            <person name="Yamamoto J."/>
            <person name="Saito K."/>
            <person name="Kawai Y."/>
            <person name="Isono Y."/>
            <person name="Nakamura Y."/>
            <person name="Nagahari K."/>
            <person name="Murakami K."/>
            <person name="Yasuda T."/>
            <person name="Iwayanagi T."/>
            <person name="Wagatsuma M."/>
            <person name="Shiratori A."/>
            <person name="Sudo H."/>
            <person name="Hosoiri T."/>
            <person name="Kaku Y."/>
            <person name="Kodaira H."/>
            <person name="Kondo H."/>
            <person name="Sugawara M."/>
            <person name="Takahashi M."/>
            <person name="Kanda K."/>
            <person name="Yokoi T."/>
            <person name="Furuya T."/>
            <person name="Kikkawa E."/>
            <person name="Omura Y."/>
            <person name="Abe K."/>
            <person name="Kamihara K."/>
            <person name="Katsuta N."/>
            <person name="Sato K."/>
            <person name="Tanikawa M."/>
            <person name="Yamazaki M."/>
            <person name="Ninomiya K."/>
            <person name="Ishibashi T."/>
            <person name="Yamashita H."/>
            <person name="Murakawa K."/>
            <person name="Fujimori K."/>
            <person name="Tanai H."/>
            <person name="Kimata M."/>
            <person name="Watanabe M."/>
            <person name="Hiraoka S."/>
            <person name="Chiba Y."/>
            <person name="Ishida S."/>
            <person name="Ono Y."/>
            <person name="Takiguchi S."/>
            <person name="Watanabe S."/>
            <person name="Yosida M."/>
            <person name="Hotuta T."/>
            <person name="Kusano J."/>
            <person name="Kanehori K."/>
            <person name="Takahashi-Fujii A."/>
            <person name="Hara H."/>
            <person name="Tanase T.-O."/>
            <person name="Nomura Y."/>
            <person name="Togiya S."/>
            <person name="Komai F."/>
            <person name="Hara R."/>
            <person name="Takeuchi K."/>
            <person name="Arita M."/>
            <person name="Imose N."/>
            <person name="Musashino K."/>
            <person name="Yuuki H."/>
            <person name="Oshima A."/>
            <person name="Sasaki N."/>
            <person name="Aotsuka S."/>
            <person name="Yoshikawa Y."/>
            <person name="Matsunawa H."/>
            <person name="Ichihara T."/>
            <person name="Shiohata N."/>
            <person name="Sano S."/>
            <person name="Moriya S."/>
            <person name="Momiyama H."/>
            <person name="Satoh N."/>
            <person name="Takami S."/>
            <person name="Terashima Y."/>
            <person name="Suzuki O."/>
            <person name="Nakagawa S."/>
            <person name="Senoh A."/>
            <person name="Mizoguchi H."/>
            <person name="Goto Y."/>
            <person name="Shimizu F."/>
            <person name="Wakebe H."/>
            <person name="Hishigaki H."/>
            <person name="Watanabe T."/>
            <person name="Sugiyama A."/>
            <person name="Takemoto M."/>
            <person name="Kawakami B."/>
            <person name="Yamazaki M."/>
            <person name="Watanabe K."/>
            <person name="Kumagai A."/>
            <person name="Itakura S."/>
            <person name="Fukuzumi Y."/>
            <person name="Fujimori Y."/>
            <person name="Komiyama M."/>
            <person name="Tashiro H."/>
            <person name="Tanigami A."/>
            <person name="Fujiwara T."/>
            <person name="Ono T."/>
            <person name="Yamada K."/>
            <person name="Fujii Y."/>
            <person name="Ozaki K."/>
            <person name="Hirao M."/>
            <person name="Ohmori Y."/>
            <person name="Kawabata A."/>
            <person name="Hikiji T."/>
            <person name="Kobatake N."/>
            <person name="Inagaki H."/>
            <person name="Ikema Y."/>
            <person name="Okamoto S."/>
            <person name="Okitani R."/>
            <person name="Kawakami T."/>
            <person name="Noguchi S."/>
            <person name="Itoh T."/>
            <person name="Shigeta K."/>
            <person name="Senba T."/>
            <person name="Matsumura K."/>
            <person name="Nakajima Y."/>
            <person name="Mizuno T."/>
            <person name="Morinaga M."/>
            <person name="Sasaki M."/>
            <person name="Togashi T."/>
            <person name="Oyama M."/>
            <person name="Hata H."/>
            <person name="Watanabe M."/>
            <person name="Komatsu T."/>
            <person name="Mizushima-Sugano J."/>
            <person name="Satoh T."/>
            <person name="Shirai Y."/>
            <person name="Takahashi Y."/>
            <person name="Nakagawa K."/>
            <person name="Okumura K."/>
            <person name="Nagase T."/>
            <person name="Nomura N."/>
            <person name="Kikuchi H."/>
            <person name="Masuho Y."/>
            <person name="Yamashita R."/>
            <person name="Nakai K."/>
            <person name="Yada T."/>
            <person name="Nakamura Y."/>
            <person name="Ohara O."/>
            <person name="Isogai T."/>
            <person name="Sugano S."/>
        </authorList>
    </citation>
    <scope>NUCLEOTIDE SEQUENCE [LARGE SCALE MRNA] (ISOFORM 1)</scope>
    <source>
        <tissue>Testis</tissue>
    </source>
</reference>
<reference key="2">
    <citation type="journal article" date="2004" name="Nature">
        <title>The DNA sequence and biology of human chromosome 19.</title>
        <authorList>
            <person name="Grimwood J."/>
            <person name="Gordon L.A."/>
            <person name="Olsen A.S."/>
            <person name="Terry A."/>
            <person name="Schmutz J."/>
            <person name="Lamerdin J.E."/>
            <person name="Hellsten U."/>
            <person name="Goodstein D."/>
            <person name="Couronne O."/>
            <person name="Tran-Gyamfi M."/>
            <person name="Aerts A."/>
            <person name="Altherr M."/>
            <person name="Ashworth L."/>
            <person name="Bajorek E."/>
            <person name="Black S."/>
            <person name="Branscomb E."/>
            <person name="Caenepeel S."/>
            <person name="Carrano A.V."/>
            <person name="Caoile C."/>
            <person name="Chan Y.M."/>
            <person name="Christensen M."/>
            <person name="Cleland C.A."/>
            <person name="Copeland A."/>
            <person name="Dalin E."/>
            <person name="Dehal P."/>
            <person name="Denys M."/>
            <person name="Detter J.C."/>
            <person name="Escobar J."/>
            <person name="Flowers D."/>
            <person name="Fotopulos D."/>
            <person name="Garcia C."/>
            <person name="Georgescu A.M."/>
            <person name="Glavina T."/>
            <person name="Gomez M."/>
            <person name="Gonzales E."/>
            <person name="Groza M."/>
            <person name="Hammon N."/>
            <person name="Hawkins T."/>
            <person name="Haydu L."/>
            <person name="Ho I."/>
            <person name="Huang W."/>
            <person name="Israni S."/>
            <person name="Jett J."/>
            <person name="Kadner K."/>
            <person name="Kimball H."/>
            <person name="Kobayashi A."/>
            <person name="Larionov V."/>
            <person name="Leem S.-H."/>
            <person name="Lopez F."/>
            <person name="Lou Y."/>
            <person name="Lowry S."/>
            <person name="Malfatti S."/>
            <person name="Martinez D."/>
            <person name="McCready P.M."/>
            <person name="Medina C."/>
            <person name="Morgan J."/>
            <person name="Nelson K."/>
            <person name="Nolan M."/>
            <person name="Ovcharenko I."/>
            <person name="Pitluck S."/>
            <person name="Pollard M."/>
            <person name="Popkie A.P."/>
            <person name="Predki P."/>
            <person name="Quan G."/>
            <person name="Ramirez L."/>
            <person name="Rash S."/>
            <person name="Retterer J."/>
            <person name="Rodriguez A."/>
            <person name="Rogers S."/>
            <person name="Salamov A."/>
            <person name="Salazar A."/>
            <person name="She X."/>
            <person name="Smith D."/>
            <person name="Slezak T."/>
            <person name="Solovyev V."/>
            <person name="Thayer N."/>
            <person name="Tice H."/>
            <person name="Tsai M."/>
            <person name="Ustaszewska A."/>
            <person name="Vo N."/>
            <person name="Wagner M."/>
            <person name="Wheeler J."/>
            <person name="Wu K."/>
            <person name="Xie G."/>
            <person name="Yang J."/>
            <person name="Dubchak I."/>
            <person name="Furey T.S."/>
            <person name="DeJong P."/>
            <person name="Dickson M."/>
            <person name="Gordon D."/>
            <person name="Eichler E.E."/>
            <person name="Pennacchio L.A."/>
            <person name="Richardson P."/>
            <person name="Stubbs L."/>
            <person name="Rokhsar D.S."/>
            <person name="Myers R.M."/>
            <person name="Rubin E.M."/>
            <person name="Lucas S.M."/>
        </authorList>
    </citation>
    <scope>NUCLEOTIDE SEQUENCE [LARGE SCALE GENOMIC DNA]</scope>
</reference>
<reference key="3">
    <citation type="journal article" date="2004" name="Genome Res.">
        <title>The status, quality, and expansion of the NIH full-length cDNA project: the Mammalian Gene Collection (MGC).</title>
        <authorList>
            <consortium name="The MGC Project Team"/>
        </authorList>
    </citation>
    <scope>NUCLEOTIDE SEQUENCE [LARGE SCALE MRNA] (ISOFORMS 1 AND 2)</scope>
    <source>
        <tissue>Lung</tissue>
    </source>
</reference>
<reference key="4">
    <citation type="journal article" date="2007" name="BMC Genomics">
        <title>The full-ORF clone resource of the German cDNA consortium.</title>
        <authorList>
            <person name="Bechtel S."/>
            <person name="Rosenfelder H."/>
            <person name="Duda A."/>
            <person name="Schmidt C.P."/>
            <person name="Ernst U."/>
            <person name="Wellenreuther R."/>
            <person name="Mehrle A."/>
            <person name="Schuster C."/>
            <person name="Bahr A."/>
            <person name="Bloecker H."/>
            <person name="Heubner D."/>
            <person name="Hoerlein A."/>
            <person name="Michel G."/>
            <person name="Wedler H."/>
            <person name="Koehrer K."/>
            <person name="Ottenwaelder B."/>
            <person name="Poustka A."/>
            <person name="Wiemann S."/>
            <person name="Schupp I."/>
        </authorList>
    </citation>
    <scope>NUCLEOTIDE SEQUENCE [LARGE SCALE MRNA] OF 234-670 (ISOFORM 3)</scope>
    <source>
        <tissue>Testis</tissue>
    </source>
</reference>
<reference key="5">
    <citation type="journal article" date="2013" name="Am. J. Hum. Genet.">
        <title>Splice-Site mutations in the axonemal outer dynein arm docking complex gene CCDC114 cause primary ciliary dyskinesia.</title>
        <authorList>
            <person name="Onoufriadis A."/>
            <person name="Paff T."/>
            <person name="Antony D."/>
            <person name="Shoemark A."/>
            <person name="Micha D."/>
            <person name="Kuyt B."/>
            <person name="Schmidts M."/>
            <person name="Petridi S."/>
            <person name="Dankert-Roelse J.E."/>
            <person name="Haarman E.G."/>
            <person name="Daniels J.M."/>
            <person name="Emes R.D."/>
            <person name="Wilson R."/>
            <person name="Hogg C."/>
            <person name="Scambler P.J."/>
            <person name="Chung E.M."/>
            <person name="Pals G."/>
            <person name="Mitchison H.M."/>
        </authorList>
    </citation>
    <scope>FUNCTION</scope>
    <scope>SUBCELLULAR LOCATION</scope>
    <scope>TISSUE SPECIFICITY</scope>
    <scope>INVOLVEMENT IN CILD20</scope>
    <scope>VARIANT CILD20 THR-248</scope>
    <scope>CHARACTERIZATION OF VARIANT CILD20 THR-24</scope>
</reference>
<reference key="6">
    <citation type="journal article" date="2013" name="Am. J. Hum. Genet.">
        <title>Exome sequencing identifies mutations in CCDC114 as a cause of primary ciliary dyskinesia.</title>
        <authorList>
            <person name="Knowles M.R."/>
            <person name="Leigh M.W."/>
            <person name="Ostrowski L.E."/>
            <person name="Huang L."/>
            <person name="Carson J.L."/>
            <person name="Hazucha M.J."/>
            <person name="Yin W."/>
            <person name="Berg J.S."/>
            <person name="Davis S.D."/>
            <person name="Dell S.D."/>
            <person name="Ferkol T.W."/>
            <person name="Rosenfeld M."/>
            <person name="Sagel S.D."/>
            <person name="Milla C.E."/>
            <person name="Olivier K.N."/>
            <person name="Turner E.H."/>
            <person name="Lewis A.P."/>
            <person name="Bamshad M.J."/>
            <person name="Nickerson D.A."/>
            <person name="Shendure J."/>
            <person name="Zariwala M.A."/>
        </authorList>
    </citation>
    <scope>FUNCTION</scope>
    <scope>INVOLVEMENT IN CILD20</scope>
    <scope>VARIANT CILD20 THR-248</scope>
    <scope>CHARACTERIZATION OF VARIANT CILD20 THR-24</scope>
    <scope>TISSUE SPECIFICITY</scope>
</reference>
<reference key="7">
    <citation type="journal article" date="2014" name="Am. J. Hum. Genet.">
        <title>CCDC151 mutations cause primary ciliary dyskinesia by disruption of the outer dynein arm docking complex formation.</title>
        <authorList>
            <consortium name="UK10K Consortium"/>
            <person name="Hjeij R."/>
            <person name="Onoufriadis A."/>
            <person name="Watson C.M."/>
            <person name="Slagle C.E."/>
            <person name="Klena N.T."/>
            <person name="Dougherty G.W."/>
            <person name="Kurkowiak M."/>
            <person name="Loges N.T."/>
            <person name="Diggle C.P."/>
            <person name="Morante N.F."/>
            <person name="Gabriel G.C."/>
            <person name="Lemke K.L."/>
            <person name="Li Y."/>
            <person name="Pennekamp P."/>
            <person name="Menchen T."/>
            <person name="Konert F."/>
            <person name="Marthin J.K."/>
            <person name="Mans D.A."/>
            <person name="Letteboer S.J."/>
            <person name="Werner C."/>
            <person name="Burgoyne T."/>
            <person name="Westermann C."/>
            <person name="Rutman A."/>
            <person name="Carr I.M."/>
            <person name="O'Callaghan C."/>
            <person name="Moya E."/>
            <person name="Chung E.M."/>
            <person name="Sheridan E."/>
            <person name="Nielsen K.G."/>
            <person name="Roepman R."/>
            <person name="Bartscherer K."/>
            <person name="Burdine R.D."/>
            <person name="Lo C.W."/>
            <person name="Omran H."/>
            <person name="Mitchison H.M."/>
        </authorList>
    </citation>
    <scope>INTERACTION WITH ODAD3</scope>
    <scope>SUBCELLULAR LOCATION</scope>
</reference>
<reference key="8">
    <citation type="journal article" date="2016" name="Am. J. Hum. Genet.">
        <title>TTC25 deficiency results in defects of the outer dynein arm docking machinery and primary ciliary dyskinesia with left-right body asymmetry randomization.</title>
        <authorList>
            <person name="Wallmeier J."/>
            <person name="Shiratori H."/>
            <person name="Dougherty G.W."/>
            <person name="Edelbusch C."/>
            <person name="Hjeij R."/>
            <person name="Loges N.T."/>
            <person name="Menchen T."/>
            <person name="Olbrich H."/>
            <person name="Pennekamp P."/>
            <person name="Raidt J."/>
            <person name="Werner C."/>
            <person name="Minegishi K."/>
            <person name="Shinohara K."/>
            <person name="Asai Y."/>
            <person name="Takaoka K."/>
            <person name="Lee C."/>
            <person name="Griese M."/>
            <person name="Memari Y."/>
            <person name="Durbin R."/>
            <person name="Kolb-Kokocinski A."/>
            <person name="Sauer S."/>
            <person name="Wallingford J.B."/>
            <person name="Hamada H."/>
            <person name="Omran H."/>
        </authorList>
    </citation>
    <scope>INTERACTION WITH ODAD4</scope>
    <scope>SUBUNIT</scope>
</reference>
<reference key="9">
    <citation type="journal article" date="2018" name="Am. J. Hum. Genet.">
        <title>Recessive DNAH9 loss-of-function mutations cause laterality defects and subtle respiratory ciliary-beating defects.</title>
        <authorList>
            <person name="Loges N.T."/>
            <person name="Antony D."/>
            <person name="Maver A."/>
            <person name="Deardorff M.A."/>
            <person name="Guelec E.Y."/>
            <person name="Gezdirici A."/>
            <person name="Noethe-Menchen T."/>
            <person name="Hoeben I.M."/>
            <person name="Jelten L."/>
            <person name="Frank D."/>
            <person name="Werner C."/>
            <person name="Tebbe J."/>
            <person name="Wu K."/>
            <person name="Goldmuntz E."/>
            <person name="Cuturilo G."/>
            <person name="Krock B."/>
            <person name="Ritter A."/>
            <person name="Hjeij R."/>
            <person name="Bakey Z."/>
            <person name="Pennekamp P."/>
            <person name="Dworniczak B."/>
            <person name="Brunner H."/>
            <person name="Peterlin B."/>
            <person name="Tanidir C."/>
            <person name="Olbrich H."/>
            <person name="Omran H."/>
            <person name="Schmidts M."/>
        </authorList>
    </citation>
    <scope>INTERACTION WITH DNAH9</scope>
</reference>
<reference key="10">
    <citation type="journal article" date="2018" name="PLoS Genet.">
        <title>Homozygous loss-of-function mutations in MNS1 cause laterality defects and likely male infertility.</title>
        <authorList>
            <person name="Ta-Shma A."/>
            <person name="Hjeij R."/>
            <person name="Perles Z."/>
            <person name="Dougherty G.W."/>
            <person name="Abu Zahira I."/>
            <person name="Letteboer S.J.F."/>
            <person name="Antony D."/>
            <person name="Darwish A."/>
            <person name="Mans D.A."/>
            <person name="Spittler S."/>
            <person name="Edelbusch C."/>
            <person name="Cindric S."/>
            <person name="Noethe-Menchen T."/>
            <person name="Olbrich H."/>
            <person name="Stuhlmann F."/>
            <person name="Aprea I."/>
            <person name="Pennekamp P."/>
            <person name="Loges N.T."/>
            <person name="Breuer O."/>
            <person name="Shaag A."/>
            <person name="Rein A.J.J.T."/>
            <person name="Gulec E.Y."/>
            <person name="Gezdirici A."/>
            <person name="Abitbul R."/>
            <person name="Elias N."/>
            <person name="Amirav I."/>
            <person name="Schmidts M."/>
            <person name="Roepman R."/>
            <person name="Elpeleg O."/>
            <person name="Omran H."/>
        </authorList>
    </citation>
    <scope>INTERACTION WITH MNS1</scope>
</reference>
<sequence length="670" mass="75046">MEGERRAYSKEVHQRINKQLEEIRRLEEVRGDLQVQISAAQNQVKRLRDSQRLENMDRLLKGRAQVQAEIEELQEQTRALDKQIQEWETRIFTHSKNVRSPGFILDQKVKIRRRIRILENQLDRVTCHFDNQLVRNAALREELDLLRIDRNRYLNVDRKLKKEIHHLHHLVSTLILSSTSAYAVREEAKAKMGLLRERAEKEEAQSEMEAQVLQRQILHLEQLHHFLKLKNNDRQPDPDVLEKREKQAGEVAEGVWKTSQERLVLCYEDALNKLSQLMGESDPDLLVQKYLEIEERNFAEFNFINEQNLELEHVQEEIKEMQEALVSARASKDDQHLLQEQQQKVLQQRMDKVHSEAERLEARFQDVRGQLEKLKADIQLLFTKAHCDSSMIDDLLGVKTSMGDRDMGLFLSLIEKRLVELLTVQAFLHAQSFTSLADAALLVLGQSLEDLPKKMAPLQPPDTLEDPPGFEASDDYPMSREELLSQVEKLVELQEQAEAQRQKDLAAAAAKLDGTLSVDLASTQRAGSSTVLVPTRHPHAIPGSILSHKTSRDRGSLGHVTFGGLSSSTGHLPSHITHGDPNTGHVTFGSTSASSGGHVTFRPVSASSYLGSTGYVGSSRGGENTEGGVESGGTASDSSGGLGSSRDHVSSTGPASSTGPGSSTSKDSRG</sequence>
<name>ODAD1_HUMAN</name>
<organism>
    <name type="scientific">Homo sapiens</name>
    <name type="common">Human</name>
    <dbReference type="NCBI Taxonomy" id="9606"/>
    <lineage>
        <taxon>Eukaryota</taxon>
        <taxon>Metazoa</taxon>
        <taxon>Chordata</taxon>
        <taxon>Craniata</taxon>
        <taxon>Vertebrata</taxon>
        <taxon>Euteleostomi</taxon>
        <taxon>Mammalia</taxon>
        <taxon>Eutheria</taxon>
        <taxon>Euarchontoglires</taxon>
        <taxon>Primates</taxon>
        <taxon>Haplorrhini</taxon>
        <taxon>Catarrhini</taxon>
        <taxon>Hominidae</taxon>
        <taxon>Homo</taxon>
    </lineage>
</organism>
<evidence type="ECO:0000250" key="1">
    <source>
        <dbReference type="UniProtKB" id="B1H228"/>
    </source>
</evidence>
<evidence type="ECO:0000250" key="2">
    <source>
        <dbReference type="UniProtKB" id="F1N2N9"/>
    </source>
</evidence>
<evidence type="ECO:0000255" key="3"/>
<evidence type="ECO:0000256" key="4">
    <source>
        <dbReference type="SAM" id="MobiDB-lite"/>
    </source>
</evidence>
<evidence type="ECO:0000269" key="5">
    <source>
    </source>
</evidence>
<evidence type="ECO:0000269" key="6">
    <source>
    </source>
</evidence>
<evidence type="ECO:0000269" key="7">
    <source>
    </source>
</evidence>
<evidence type="ECO:0000269" key="8">
    <source>
    </source>
</evidence>
<evidence type="ECO:0000269" key="9">
    <source>
    </source>
</evidence>
<evidence type="ECO:0000269" key="10">
    <source>
    </source>
</evidence>
<evidence type="ECO:0000303" key="11">
    <source>
    </source>
</evidence>
<evidence type="ECO:0000303" key="12">
    <source>
    </source>
</evidence>
<evidence type="ECO:0000305" key="13"/>
<evidence type="ECO:0000305" key="14">
    <source>
    </source>
</evidence>
<evidence type="ECO:0000305" key="15">
    <source>
    </source>
</evidence>
<evidence type="ECO:0000312" key="16">
    <source>
        <dbReference type="HGNC" id="HGNC:26560"/>
    </source>
</evidence>
<protein>
    <recommendedName>
        <fullName>Outer dynein arm-docking complex subunit 1</fullName>
    </recommendedName>
    <alternativeName>
        <fullName>Coiled-coil domain-containing protein 114</fullName>
    </alternativeName>
</protein>
<comment type="function">
    <text evidence="2 8 14 15">Component of the outer dynein arm-docking complex (ODA-DC) that mediates outer dynein arms (ODA) binding onto the doublet microtubule. Involved in mediating assembly of both ODAs and their axonemal docking complex onto ciliary microtubules (By similarity).</text>
</comment>
<comment type="subunit">
    <text evidence="2 7 8 9 10">Component of the outer dynein arm-docking complex along with ODAD2, ODAD3, ODAD4 and CLXN (PubMed:25192045, PubMed:27486780). Interacts with ODAD3 (PubMed:25192045). Interacts with ODAD4; this interaction may facilitate the recruitment and/or attachment of outer dynein arm docking complex proteins, including ODAD1, ODAD3, and ODAD4 to ciliary axonemes (PubMed:27486780). Interacts with DNAH9 (PubMed:25192045, PubMed:27486780, PubMed:30471718). Interacts with MNS1 (PubMed:30148830). Interacts with PIERCE1 and PIERCE2; the interactions link the outer dynein arms docking complex (ODA-DC) to the internal microtubule inner proteins (MIP) in cilium axoneme (By similarity).</text>
</comment>
<comment type="interaction">
    <interactant intactId="EBI-10173858">
        <id>Q96M63</id>
    </interactant>
    <interactant intactId="EBI-747505">
        <id>Q8TAB5</id>
        <label>C1orf216</label>
    </interactant>
    <organismsDiffer>false</organismsDiffer>
    <experiments>6</experiments>
</comment>
<comment type="interaction">
    <interactant intactId="EBI-10173858">
        <id>Q96M63</id>
    </interactant>
    <interactant intactId="EBI-2514791">
        <id>Q96CS2</id>
        <label>HAUS1</label>
    </interactant>
    <organismsDiffer>false</organismsDiffer>
    <experiments>4</experiments>
</comment>
<comment type="interaction">
    <interactant intactId="EBI-10173858">
        <id>Q96M63</id>
    </interactant>
    <interactant intactId="EBI-16429135">
        <id>A0A0S2Z4Q4</id>
        <label>HGS</label>
    </interactant>
    <organismsDiffer>false</organismsDiffer>
    <experiments>3</experiments>
</comment>
<comment type="interaction">
    <interactant intactId="EBI-10173858">
        <id>Q96M63</id>
    </interactant>
    <interactant intactId="EBI-740220">
        <id>O14964</id>
        <label>HGS</label>
    </interactant>
    <organismsDiffer>false</organismsDiffer>
    <experiments>10</experiments>
</comment>
<comment type="interaction">
    <interactant intactId="EBI-10173858">
        <id>Q96M63</id>
    </interactant>
    <interactant intactId="EBI-721019">
        <id>Q07866</id>
        <label>KLC1</label>
    </interactant>
    <organismsDiffer>false</organismsDiffer>
    <experiments>3</experiments>
</comment>
<comment type="interaction">
    <interactant intactId="EBI-10173858">
        <id>Q96M63</id>
    </interactant>
    <interactant intactId="EBI-739832">
        <id>Q8TBB1</id>
        <label>LNX1</label>
    </interactant>
    <organismsDiffer>false</organismsDiffer>
    <experiments>3</experiments>
</comment>
<comment type="interaction">
    <interactant intactId="EBI-10173858">
        <id>Q96M63</id>
    </interactant>
    <interactant intactId="EBI-8466445">
        <id>A5D8V7</id>
        <label>ODAD3</label>
    </interactant>
    <organismsDiffer>false</organismsDiffer>
    <experiments>3</experiments>
</comment>
<comment type="interaction">
    <interactant intactId="EBI-10173858">
        <id>Q96M63</id>
    </interactant>
    <interactant intactId="EBI-10173824">
        <id>A5D8V7-2</id>
        <label>ODAD3</label>
    </interactant>
    <organismsDiffer>false</organismsDiffer>
    <experiments>3</experiments>
</comment>
<comment type="interaction">
    <interactant intactId="EBI-10173858">
        <id>Q96M63</id>
    </interactant>
    <interactant intactId="EBI-10184033">
        <id>Q5VU62</id>
        <label>TPM3</label>
    </interactant>
    <organismsDiffer>false</organismsDiffer>
    <experiments>3</experiments>
</comment>
<comment type="interaction">
    <interactant intactId="EBI-10173858">
        <id>Q96M63</id>
    </interactant>
    <interactant intactId="EBI-2932492">
        <id>Q99757</id>
        <label>TXN2</label>
    </interactant>
    <organismsDiffer>false</organismsDiffer>
    <experiments>3</experiments>
</comment>
<comment type="subcellular location">
    <subcellularLocation>
        <location evidence="6 7">Cytoplasm</location>
        <location evidence="6 7">Cytoskeleton</location>
        <location evidence="6 7">Cilium axoneme</location>
    </subcellularLocation>
</comment>
<comment type="alternative products">
    <event type="alternative splicing"/>
    <isoform>
        <id>Q96M63-1</id>
        <name>1</name>
        <sequence type="displayed"/>
    </isoform>
    <isoform>
        <id>Q96M63-4</id>
        <name>2</name>
        <sequence type="described" ref="VSP_036212"/>
    </isoform>
    <isoform>
        <id>Q96M63-5</id>
        <name>3</name>
        <sequence type="described" ref="VSP_036213 VSP_036214"/>
    </isoform>
</comment>
<comment type="tissue specificity">
    <text evidence="5 6">Expressed in nasal epithelial cells (PubMed:23261302, PubMed:23261303). Highly expressed in testis and also detected in lung, brain and kidney (PubMed:23261302).</text>
</comment>
<comment type="disease" evidence="5 6">
    <disease id="DI-03643">
        <name>Ciliary dyskinesia, primary, 20</name>
        <acronym>CILD20</acronym>
        <description>A disorder characterized by abnormalities of motile cilia. Respiratory infections leading to chronic inflammation and bronchiectasis are recurrent, due to defects in the respiratory cilia. Patients may exhibit randomization of left-right body asymmetry and situs inversus, due to dysfunction of monocilia at the embryonic node. Primary ciliary dyskinesia associated with situs inversus is referred to as Kartagener syndrome. Unlike other forms of CILD characterized by reduced fertility, patients with CILD20 do not appear to be infertile.</description>
        <dbReference type="MIM" id="615067"/>
    </disease>
    <text evidence="5 6">The disease is caused by variants affecting the gene represented in this entry. The genetic variation producing the missense variant p.A248T, associated with CILD20, has been shown to predominantly affect splicing, yielding aberrant transcripts carrying premature translation termination signals. Only very low expression levels of the transcript carrying the missense could be detected in patients' nasal epithelial cells.</text>
</comment>
<comment type="similarity">
    <text evidence="13">Belongs to the ODA1/DCC2 family.</text>
</comment>
<comment type="sequence caution" evidence="13">
    <conflict type="miscellaneous discrepancy">
        <sequence resource="EMBL-CDS" id="BAB71448"/>
    </conflict>
    <text>Unlikely isoform. Aberrant splice sites.</text>
</comment>
<comment type="sequence caution" evidence="13">
    <conflict type="miscellaneous discrepancy">
        <sequence resource="EMBL-CDS" id="BAC87296"/>
    </conflict>
    <text>Unlikely isoform. Aberrant splice sites.</text>
</comment>
<gene>
    <name evidence="16" type="primary">ODAD1</name>
    <name type="synonym">CCDC114</name>
</gene>